<dbReference type="EC" id="2.4.2.29" evidence="1"/>
<dbReference type="EMBL" id="CP000447">
    <property type="protein sequence ID" value="ABI72542.1"/>
    <property type="molecule type" value="Genomic_DNA"/>
</dbReference>
<dbReference type="RefSeq" id="WP_011638151.1">
    <property type="nucleotide sequence ID" value="NC_008345.1"/>
</dbReference>
<dbReference type="SMR" id="Q07ZM2"/>
<dbReference type="STRING" id="318167.Sfri_2702"/>
<dbReference type="KEGG" id="sfr:Sfri_2702"/>
<dbReference type="eggNOG" id="COG0343">
    <property type="taxonomic scope" value="Bacteria"/>
</dbReference>
<dbReference type="HOGENOM" id="CLU_022060_0_1_6"/>
<dbReference type="OrthoDB" id="9805417at2"/>
<dbReference type="UniPathway" id="UPA00392"/>
<dbReference type="Proteomes" id="UP000000684">
    <property type="component" value="Chromosome"/>
</dbReference>
<dbReference type="GO" id="GO:0005829">
    <property type="term" value="C:cytosol"/>
    <property type="evidence" value="ECO:0007669"/>
    <property type="project" value="TreeGrafter"/>
</dbReference>
<dbReference type="GO" id="GO:0046872">
    <property type="term" value="F:metal ion binding"/>
    <property type="evidence" value="ECO:0007669"/>
    <property type="project" value="UniProtKB-KW"/>
</dbReference>
<dbReference type="GO" id="GO:0008479">
    <property type="term" value="F:tRNA-guanosine(34) queuine transglycosylase activity"/>
    <property type="evidence" value="ECO:0007669"/>
    <property type="project" value="UniProtKB-UniRule"/>
</dbReference>
<dbReference type="GO" id="GO:0008616">
    <property type="term" value="P:queuosine biosynthetic process"/>
    <property type="evidence" value="ECO:0007669"/>
    <property type="project" value="UniProtKB-UniRule"/>
</dbReference>
<dbReference type="GO" id="GO:0002099">
    <property type="term" value="P:tRNA wobble guanine modification"/>
    <property type="evidence" value="ECO:0007669"/>
    <property type="project" value="TreeGrafter"/>
</dbReference>
<dbReference type="GO" id="GO:0101030">
    <property type="term" value="P:tRNA-guanine transglycosylation"/>
    <property type="evidence" value="ECO:0007669"/>
    <property type="project" value="InterPro"/>
</dbReference>
<dbReference type="FunFam" id="3.20.20.105:FF:000001">
    <property type="entry name" value="Queuine tRNA-ribosyltransferase"/>
    <property type="match status" value="1"/>
</dbReference>
<dbReference type="Gene3D" id="3.20.20.105">
    <property type="entry name" value="Queuine tRNA-ribosyltransferase-like"/>
    <property type="match status" value="1"/>
</dbReference>
<dbReference type="HAMAP" id="MF_00168">
    <property type="entry name" value="Q_tRNA_Tgt"/>
    <property type="match status" value="1"/>
</dbReference>
<dbReference type="InterPro" id="IPR050076">
    <property type="entry name" value="ArchSynthase1/Queuine_TRR"/>
</dbReference>
<dbReference type="InterPro" id="IPR004803">
    <property type="entry name" value="TGT"/>
</dbReference>
<dbReference type="InterPro" id="IPR036511">
    <property type="entry name" value="TGT-like_sf"/>
</dbReference>
<dbReference type="InterPro" id="IPR002616">
    <property type="entry name" value="tRNA_ribo_trans-like"/>
</dbReference>
<dbReference type="NCBIfam" id="TIGR00430">
    <property type="entry name" value="Q_tRNA_tgt"/>
    <property type="match status" value="1"/>
</dbReference>
<dbReference type="NCBIfam" id="TIGR00449">
    <property type="entry name" value="tgt_general"/>
    <property type="match status" value="1"/>
</dbReference>
<dbReference type="PANTHER" id="PTHR46499">
    <property type="entry name" value="QUEUINE TRNA-RIBOSYLTRANSFERASE"/>
    <property type="match status" value="1"/>
</dbReference>
<dbReference type="PANTHER" id="PTHR46499:SF1">
    <property type="entry name" value="QUEUINE TRNA-RIBOSYLTRANSFERASE"/>
    <property type="match status" value="1"/>
</dbReference>
<dbReference type="Pfam" id="PF01702">
    <property type="entry name" value="TGT"/>
    <property type="match status" value="1"/>
</dbReference>
<dbReference type="SUPFAM" id="SSF51713">
    <property type="entry name" value="tRNA-guanine transglycosylase"/>
    <property type="match status" value="1"/>
</dbReference>
<organism>
    <name type="scientific">Shewanella frigidimarina (strain NCIMB 400)</name>
    <dbReference type="NCBI Taxonomy" id="318167"/>
    <lineage>
        <taxon>Bacteria</taxon>
        <taxon>Pseudomonadati</taxon>
        <taxon>Pseudomonadota</taxon>
        <taxon>Gammaproteobacteria</taxon>
        <taxon>Alteromonadales</taxon>
        <taxon>Shewanellaceae</taxon>
        <taxon>Shewanella</taxon>
    </lineage>
</organism>
<comment type="function">
    <text evidence="1">Catalyzes the base-exchange of a guanine (G) residue with the queuine precursor 7-aminomethyl-7-deazaguanine (PreQ1) at position 34 (anticodon wobble position) in tRNAs with GU(N) anticodons (tRNA-Asp, -Asn, -His and -Tyr). Catalysis occurs through a double-displacement mechanism. The nucleophile active site attacks the C1' of nucleotide 34 to detach the guanine base from the RNA, forming a covalent enzyme-RNA intermediate. The proton acceptor active site deprotonates the incoming PreQ1, allowing a nucleophilic attack on the C1' of the ribose to form the product. After dissociation, two additional enzymatic reactions on the tRNA convert PreQ1 to queuine (Q), resulting in the hypermodified nucleoside queuosine (7-(((4,5-cis-dihydroxy-2-cyclopenten-1-yl)amino)methyl)-7-deazaguanosine).</text>
</comment>
<comment type="catalytic activity">
    <reaction evidence="1">
        <text>7-aminomethyl-7-carbaguanine + guanosine(34) in tRNA = 7-aminomethyl-7-carbaguanosine(34) in tRNA + guanine</text>
        <dbReference type="Rhea" id="RHEA:24104"/>
        <dbReference type="Rhea" id="RHEA-COMP:10341"/>
        <dbReference type="Rhea" id="RHEA-COMP:10342"/>
        <dbReference type="ChEBI" id="CHEBI:16235"/>
        <dbReference type="ChEBI" id="CHEBI:58703"/>
        <dbReference type="ChEBI" id="CHEBI:74269"/>
        <dbReference type="ChEBI" id="CHEBI:82833"/>
        <dbReference type="EC" id="2.4.2.29"/>
    </reaction>
</comment>
<comment type="cofactor">
    <cofactor evidence="1">
        <name>Zn(2+)</name>
        <dbReference type="ChEBI" id="CHEBI:29105"/>
    </cofactor>
    <text evidence="1">Binds 1 zinc ion per subunit.</text>
</comment>
<comment type="pathway">
    <text evidence="1">tRNA modification; tRNA-queuosine biosynthesis.</text>
</comment>
<comment type="subunit">
    <text evidence="1">Homodimer. Within each dimer, one monomer is responsible for RNA recognition and catalysis, while the other monomer binds to the replacement base PreQ1.</text>
</comment>
<comment type="similarity">
    <text evidence="1">Belongs to the queuine tRNA-ribosyltransferase family.</text>
</comment>
<evidence type="ECO:0000255" key="1">
    <source>
        <dbReference type="HAMAP-Rule" id="MF_00168"/>
    </source>
</evidence>
<name>TGT_SHEFN</name>
<keyword id="KW-0328">Glycosyltransferase</keyword>
<keyword id="KW-0479">Metal-binding</keyword>
<keyword id="KW-0671">Queuosine biosynthesis</keyword>
<keyword id="KW-1185">Reference proteome</keyword>
<keyword id="KW-0808">Transferase</keyword>
<keyword id="KW-0819">tRNA processing</keyword>
<keyword id="KW-0862">Zinc</keyword>
<proteinExistence type="inferred from homology"/>
<protein>
    <recommendedName>
        <fullName evidence="1">Queuine tRNA-ribosyltransferase</fullName>
        <ecNumber evidence="1">2.4.2.29</ecNumber>
    </recommendedName>
    <alternativeName>
        <fullName evidence="1">Guanine insertion enzyme</fullName>
    </alternativeName>
    <alternativeName>
        <fullName evidence="1">tRNA-guanine transglycosylase</fullName>
    </alternativeName>
</protein>
<gene>
    <name evidence="1" type="primary">tgt</name>
    <name type="ordered locus">Sfri_2702</name>
</gene>
<sequence length="374" mass="42451">MKFELDTTDGRARRGRLIFDRGTVETPAFMPVGTYGTVKGMTPEEVRATGADILLGNTFHLWLRPGEEIMRKHGDLHDFMNWQRPILTDSGGFQVFSLGDIRKITEEGVHFRSPINGEKIFLDPEKSMQIQDSLGSDVVMIFDECTPYPATHDEARKSMQMSLRWAKRSRDEFDRLENPNSLFGIIQGGVFEDLRDESVKGLLDIGFDGYAVGGLAVGEPKADMHRILEHVCPQIPADKPRYLMGVGKPEDLVEGVRRGVDMFDCVMPTRNARNGHLFTSEGVIKIRNARHRDDTATLDPKCDCYTCKNYSRAYLYHLDRCNEILGARLNTIHNLRYYQMLMEGLRGAIETGTLDAFVKEFYTSFGREVPELIV</sequence>
<feature type="chain" id="PRO_1000016847" description="Queuine tRNA-ribosyltransferase">
    <location>
        <begin position="1"/>
        <end position="374"/>
    </location>
</feature>
<feature type="region of interest" description="RNA binding" evidence="1">
    <location>
        <begin position="245"/>
        <end position="251"/>
    </location>
</feature>
<feature type="region of interest" description="RNA binding; important for wobble base 34 recognition" evidence="1">
    <location>
        <begin position="269"/>
        <end position="273"/>
    </location>
</feature>
<feature type="active site" description="Proton acceptor" evidence="1">
    <location>
        <position position="89"/>
    </location>
</feature>
<feature type="active site" description="Nucleophile" evidence="1">
    <location>
        <position position="264"/>
    </location>
</feature>
<feature type="binding site" evidence="1">
    <location>
        <begin position="89"/>
        <end position="93"/>
    </location>
    <ligand>
        <name>substrate</name>
    </ligand>
</feature>
<feature type="binding site" evidence="1">
    <location>
        <position position="143"/>
    </location>
    <ligand>
        <name>substrate</name>
    </ligand>
</feature>
<feature type="binding site" evidence="1">
    <location>
        <position position="187"/>
    </location>
    <ligand>
        <name>substrate</name>
    </ligand>
</feature>
<feature type="binding site" evidence="1">
    <location>
        <position position="214"/>
    </location>
    <ligand>
        <name>substrate</name>
    </ligand>
</feature>
<feature type="binding site" evidence="1">
    <location>
        <position position="302"/>
    </location>
    <ligand>
        <name>Zn(2+)</name>
        <dbReference type="ChEBI" id="CHEBI:29105"/>
    </ligand>
</feature>
<feature type="binding site" evidence="1">
    <location>
        <position position="304"/>
    </location>
    <ligand>
        <name>Zn(2+)</name>
        <dbReference type="ChEBI" id="CHEBI:29105"/>
    </ligand>
</feature>
<feature type="binding site" evidence="1">
    <location>
        <position position="307"/>
    </location>
    <ligand>
        <name>Zn(2+)</name>
        <dbReference type="ChEBI" id="CHEBI:29105"/>
    </ligand>
</feature>
<feature type="binding site" evidence="1">
    <location>
        <position position="333"/>
    </location>
    <ligand>
        <name>Zn(2+)</name>
        <dbReference type="ChEBI" id="CHEBI:29105"/>
    </ligand>
</feature>
<reference key="1">
    <citation type="submission" date="2006-08" db="EMBL/GenBank/DDBJ databases">
        <title>Complete sequence of Shewanella frigidimarina NCIMB 400.</title>
        <authorList>
            <consortium name="US DOE Joint Genome Institute"/>
            <person name="Copeland A."/>
            <person name="Lucas S."/>
            <person name="Lapidus A."/>
            <person name="Barry K."/>
            <person name="Detter J.C."/>
            <person name="Glavina del Rio T."/>
            <person name="Hammon N."/>
            <person name="Israni S."/>
            <person name="Dalin E."/>
            <person name="Tice H."/>
            <person name="Pitluck S."/>
            <person name="Fredrickson J.K."/>
            <person name="Kolker E."/>
            <person name="McCuel L.A."/>
            <person name="DiChristina T."/>
            <person name="Nealson K.H."/>
            <person name="Newman D."/>
            <person name="Tiedje J.M."/>
            <person name="Zhou J."/>
            <person name="Romine M.F."/>
            <person name="Culley D.E."/>
            <person name="Serres M."/>
            <person name="Chertkov O."/>
            <person name="Brettin T."/>
            <person name="Bruce D."/>
            <person name="Han C."/>
            <person name="Tapia R."/>
            <person name="Gilna P."/>
            <person name="Schmutz J."/>
            <person name="Larimer F."/>
            <person name="Land M."/>
            <person name="Hauser L."/>
            <person name="Kyrpides N."/>
            <person name="Mikhailova N."/>
            <person name="Richardson P."/>
        </authorList>
    </citation>
    <scope>NUCLEOTIDE SEQUENCE [LARGE SCALE GENOMIC DNA]</scope>
    <source>
        <strain>NCIMB 400</strain>
    </source>
</reference>
<accession>Q07ZM2</accession>